<dbReference type="EMBL" id="AY116585">
    <property type="protein sequence ID" value="AAM66766.1"/>
    <property type="molecule type" value="Genomic_DNA"/>
</dbReference>
<dbReference type="EMBL" id="X03267">
    <property type="protein sequence ID" value="CAA27021.1"/>
    <property type="molecule type" value="mRNA"/>
</dbReference>
<dbReference type="PIR" id="A01394">
    <property type="entry name" value="WFPGBB"/>
</dbReference>
<dbReference type="RefSeq" id="NP_001158314.1">
    <property type="nucleotide sequence ID" value="NM_001164842.1"/>
</dbReference>
<dbReference type="SMR" id="P04088"/>
<dbReference type="FunCoup" id="P04088">
    <property type="interactions" value="307"/>
</dbReference>
<dbReference type="STRING" id="9823.ENSSSCP00000058310"/>
<dbReference type="GlyCosmos" id="P04088">
    <property type="glycosylation" value="1 site, No reported glycans"/>
</dbReference>
<dbReference type="GlyGen" id="P04088">
    <property type="glycosylation" value="2 sites"/>
</dbReference>
<dbReference type="GeneID" id="397490"/>
<dbReference type="KEGG" id="ssc:397490"/>
<dbReference type="CTD" id="3625"/>
<dbReference type="InParanoid" id="P04088"/>
<dbReference type="OrthoDB" id="6516235at2759"/>
<dbReference type="Proteomes" id="UP000008227">
    <property type="component" value="Unplaced"/>
</dbReference>
<dbReference type="Proteomes" id="UP000314985">
    <property type="component" value="Unplaced"/>
</dbReference>
<dbReference type="Proteomes" id="UP000694570">
    <property type="component" value="Unplaced"/>
</dbReference>
<dbReference type="Proteomes" id="UP000694571">
    <property type="component" value="Unplaced"/>
</dbReference>
<dbReference type="Proteomes" id="UP000694720">
    <property type="component" value="Unplaced"/>
</dbReference>
<dbReference type="Proteomes" id="UP000694722">
    <property type="component" value="Unplaced"/>
</dbReference>
<dbReference type="Proteomes" id="UP000694723">
    <property type="component" value="Unplaced"/>
</dbReference>
<dbReference type="Proteomes" id="UP000694724">
    <property type="component" value="Unplaced"/>
</dbReference>
<dbReference type="Proteomes" id="UP000694725">
    <property type="component" value="Unplaced"/>
</dbReference>
<dbReference type="Proteomes" id="UP000694726">
    <property type="component" value="Unplaced"/>
</dbReference>
<dbReference type="Proteomes" id="UP000694727">
    <property type="component" value="Unplaced"/>
</dbReference>
<dbReference type="Proteomes" id="UP000694728">
    <property type="component" value="Unplaced"/>
</dbReference>
<dbReference type="GO" id="GO:0005615">
    <property type="term" value="C:extracellular space"/>
    <property type="evidence" value="ECO:0000318"/>
    <property type="project" value="GO_Central"/>
</dbReference>
<dbReference type="GO" id="GO:0048471">
    <property type="term" value="C:perinuclear region of cytoplasm"/>
    <property type="evidence" value="ECO:0000250"/>
    <property type="project" value="UniProtKB"/>
</dbReference>
<dbReference type="GO" id="GO:0005125">
    <property type="term" value="F:cytokine activity"/>
    <property type="evidence" value="ECO:0000318"/>
    <property type="project" value="GO_Central"/>
</dbReference>
<dbReference type="GO" id="GO:0008083">
    <property type="term" value="F:growth factor activity"/>
    <property type="evidence" value="ECO:0007669"/>
    <property type="project" value="UniProtKB-KW"/>
</dbReference>
<dbReference type="GO" id="GO:0005179">
    <property type="term" value="F:hormone activity"/>
    <property type="evidence" value="ECO:0007669"/>
    <property type="project" value="UniProtKB-KW"/>
</dbReference>
<dbReference type="GO" id="GO:0042803">
    <property type="term" value="F:protein homodimerization activity"/>
    <property type="evidence" value="ECO:0000250"/>
    <property type="project" value="UniProtKB"/>
</dbReference>
<dbReference type="GO" id="GO:0032924">
    <property type="term" value="P:activin receptor signaling pathway"/>
    <property type="evidence" value="ECO:0000250"/>
    <property type="project" value="UniProtKB"/>
</dbReference>
<dbReference type="GO" id="GO:0032869">
    <property type="term" value="P:cellular response to insulin stimulus"/>
    <property type="evidence" value="ECO:0000250"/>
    <property type="project" value="UniProtKB"/>
</dbReference>
<dbReference type="GO" id="GO:0009267">
    <property type="term" value="P:cellular response to starvation"/>
    <property type="evidence" value="ECO:0000250"/>
    <property type="project" value="UniProtKB"/>
</dbReference>
<dbReference type="GO" id="GO:0045444">
    <property type="term" value="P:fat cell differentiation"/>
    <property type="evidence" value="ECO:0000250"/>
    <property type="project" value="UniProtKB"/>
</dbReference>
<dbReference type="GO" id="GO:0046882">
    <property type="term" value="P:negative regulation of follicle-stimulating hormone secretion"/>
    <property type="evidence" value="ECO:0000250"/>
    <property type="project" value="UniProtKB"/>
</dbReference>
<dbReference type="GO" id="GO:0032686">
    <property type="term" value="P:negative regulation of hepatocyte growth factor production"/>
    <property type="evidence" value="ECO:0000250"/>
    <property type="project" value="UniProtKB"/>
</dbReference>
<dbReference type="GO" id="GO:0046676">
    <property type="term" value="P:negative regulation of insulin secretion"/>
    <property type="evidence" value="ECO:0000250"/>
    <property type="project" value="UniProtKB"/>
</dbReference>
<dbReference type="GO" id="GO:0046881">
    <property type="term" value="P:positive regulation of follicle-stimulating hormone secretion"/>
    <property type="evidence" value="ECO:0000250"/>
    <property type="project" value="UniProtKB"/>
</dbReference>
<dbReference type="GO" id="GO:0060279">
    <property type="term" value="P:positive regulation of ovulation"/>
    <property type="evidence" value="ECO:0000250"/>
    <property type="project" value="UniProtKB"/>
</dbReference>
<dbReference type="GO" id="GO:0009611">
    <property type="term" value="P:response to wounding"/>
    <property type="evidence" value="ECO:0000250"/>
    <property type="project" value="UniProtKB"/>
</dbReference>
<dbReference type="CDD" id="cd19405">
    <property type="entry name" value="TGF_beta_INHBB"/>
    <property type="match status" value="1"/>
</dbReference>
<dbReference type="FunFam" id="2.10.90.10:FF:000005">
    <property type="entry name" value="Inhibin beta A chain"/>
    <property type="match status" value="1"/>
</dbReference>
<dbReference type="FunFam" id="2.60.120.970:FF:000012">
    <property type="entry name" value="inhibin beta B chain"/>
    <property type="match status" value="1"/>
</dbReference>
<dbReference type="Gene3D" id="2.60.120.970">
    <property type="match status" value="1"/>
</dbReference>
<dbReference type="Gene3D" id="2.10.90.10">
    <property type="entry name" value="Cystine-knot cytokines"/>
    <property type="match status" value="1"/>
</dbReference>
<dbReference type="InterPro" id="IPR029034">
    <property type="entry name" value="Cystine-knot_cytokine"/>
</dbReference>
<dbReference type="InterPro" id="IPR000381">
    <property type="entry name" value="INHBB_C"/>
</dbReference>
<dbReference type="InterPro" id="IPR001839">
    <property type="entry name" value="TGF-b_C"/>
</dbReference>
<dbReference type="InterPro" id="IPR001111">
    <property type="entry name" value="TGF-b_propeptide"/>
</dbReference>
<dbReference type="InterPro" id="IPR015615">
    <property type="entry name" value="TGF-beta-rel"/>
</dbReference>
<dbReference type="InterPro" id="IPR017948">
    <property type="entry name" value="TGFb_CS"/>
</dbReference>
<dbReference type="PANTHER" id="PTHR11848:SF29">
    <property type="entry name" value="INHIBIN BETA B CHAIN"/>
    <property type="match status" value="1"/>
</dbReference>
<dbReference type="PANTHER" id="PTHR11848">
    <property type="entry name" value="TGF-BETA FAMILY"/>
    <property type="match status" value="1"/>
</dbReference>
<dbReference type="Pfam" id="PF00019">
    <property type="entry name" value="TGF_beta"/>
    <property type="match status" value="1"/>
</dbReference>
<dbReference type="Pfam" id="PF00688">
    <property type="entry name" value="TGFb_propeptide"/>
    <property type="match status" value="1"/>
</dbReference>
<dbReference type="PRINTS" id="PR00671">
    <property type="entry name" value="INHIBINBB"/>
</dbReference>
<dbReference type="SMART" id="SM00204">
    <property type="entry name" value="TGFB"/>
    <property type="match status" value="1"/>
</dbReference>
<dbReference type="SUPFAM" id="SSF57501">
    <property type="entry name" value="Cystine-knot cytokines"/>
    <property type="match status" value="1"/>
</dbReference>
<dbReference type="PROSITE" id="PS00250">
    <property type="entry name" value="TGF_BETA_1"/>
    <property type="match status" value="1"/>
</dbReference>
<dbReference type="PROSITE" id="PS51362">
    <property type="entry name" value="TGF_BETA_2"/>
    <property type="match status" value="1"/>
</dbReference>
<sequence length="407" mass="45038">MDGLPGRALGAACLLLLAAGWLGPEAWGSPTPPPSPAAPPPPPPPGALGGSQDTCTSCGGFRRPEELGRLDGDFLEAVKRHILNRLQMRGRPNITHAVPKAAMVTALRKLHAGKVREDGRVEIPHLDGHASPGADGQERVSEIISFAETDGLASSRVRLYFFISNEGNQNLFVVQASLWLYLKLLPYVLEKGSRRKVRVKVYFQEPGHGDRWDVVEKRVDLKRSGWHTLPLTEAIQALFERGERRLNLDVQCDGCQELAVVPVFVDPGEESHRPFVVVQARLVDSRHRIRKRGLECDGRTNLCCRQQFFIDFRLIGWSDWIIAPTGYYGNYCEGSCPAYLAGVPGSASSFHTAVVNQYRMRGLNPGTVNSCCIPTKLSTMSMLYFDDEYNIVKRDVPNMIVEECGCA</sequence>
<organism>
    <name type="scientific">Sus scrofa</name>
    <name type="common">Pig</name>
    <dbReference type="NCBI Taxonomy" id="9823"/>
    <lineage>
        <taxon>Eukaryota</taxon>
        <taxon>Metazoa</taxon>
        <taxon>Chordata</taxon>
        <taxon>Craniata</taxon>
        <taxon>Vertebrata</taxon>
        <taxon>Euteleostomi</taxon>
        <taxon>Mammalia</taxon>
        <taxon>Eutheria</taxon>
        <taxon>Laurasiatheria</taxon>
        <taxon>Artiodactyla</taxon>
        <taxon>Suina</taxon>
        <taxon>Suidae</taxon>
        <taxon>Sus</taxon>
    </lineage>
</organism>
<name>INHBB_PIG</name>
<feature type="signal peptide" evidence="4">
    <location>
        <begin position="1"/>
        <end position="28"/>
    </location>
</feature>
<feature type="propeptide" id="PRO_0000033726" evidence="6">
    <location>
        <begin position="29"/>
        <end position="292"/>
    </location>
</feature>
<feature type="chain" id="PRO_0000033727" description="Inhibin beta B chain">
    <location>
        <begin position="293"/>
        <end position="407"/>
    </location>
</feature>
<feature type="region of interest" description="Disordered" evidence="5">
    <location>
        <begin position="27"/>
        <end position="60"/>
    </location>
</feature>
<feature type="compositionally biased region" description="Pro residues" evidence="5">
    <location>
        <begin position="30"/>
        <end position="46"/>
    </location>
</feature>
<feature type="glycosylation site" description="N-linked (GlcNAc...) asparagine" evidence="4">
    <location>
        <position position="93"/>
    </location>
</feature>
<feature type="disulfide bond" evidence="2">
    <location>
        <begin position="296"/>
        <end position="304"/>
    </location>
</feature>
<feature type="disulfide bond" evidence="2">
    <location>
        <begin position="303"/>
        <end position="372"/>
    </location>
</feature>
<feature type="disulfide bond" evidence="2">
    <location>
        <begin position="332"/>
        <end position="404"/>
    </location>
</feature>
<feature type="disulfide bond" evidence="2">
    <location>
        <begin position="336"/>
        <end position="406"/>
    </location>
</feature>
<feature type="disulfide bond" description="Interchain" evidence="2">
    <location>
        <position position="371"/>
    </location>
</feature>
<feature type="sequence conflict" description="In Ref. 2." evidence="7" ref="2">
    <original>GGFRRP</original>
    <variation>RAAGAE</variation>
    <location>
        <begin position="59"/>
        <end position="64"/>
    </location>
</feature>
<feature type="sequence conflict" description="In Ref. 2; CAA27021." evidence="7" ref="2">
    <original>V</original>
    <variation>G</variation>
    <location>
        <position position="283"/>
    </location>
</feature>
<keyword id="KW-0165">Cleavage on pair of basic residues</keyword>
<keyword id="KW-0903">Direct protein sequencing</keyword>
<keyword id="KW-1015">Disulfide bond</keyword>
<keyword id="KW-0325">Glycoprotein</keyword>
<keyword id="KW-0339">Growth factor</keyword>
<keyword id="KW-0372">Hormone</keyword>
<keyword id="KW-1185">Reference proteome</keyword>
<keyword id="KW-0964">Secreted</keyword>
<keyword id="KW-0732">Signal</keyword>
<comment type="function">
    <text evidence="2">Inhibins and activins inhibit and activate, respectively, the secretion of follitropin by the pituitary gland. Inhibins/activins are involved in regulating a number of diverse functions such as hypothalamic and pituitary hormone secretion, gonadal hormone secretion, germ cell development and maturation, erythroid differentiation, insulin secretion, nerve cell survival, embryonic axial development or bone growth, depending on their subunit composition. Inhibins appear to oppose the functions of activins.</text>
</comment>
<comment type="function">
    <text evidence="2">Activin B is a dimer of alpha and beta-B that plays a role in several essential biological processes including embryonic development, stem cell maintenance and differentiation, haematopoiesis, cell proliferation and wound healing. Signals through type I receptor ACVR1C, abundantly expressed in pancreatic beta cells, and type II receptors like ACVR2A. Upon ligand binding, these receptors phosphorylate intracellular signaling mediators SMAD2 and SMAD3, which form a complex with SMAD4, translocate to the nucleus, and regulate gene expression. Plays a crucial role in the induction of hepcidin by inflammation through activation of ACVR1C and subsequent phosphorylation of SMAD1/5/8 (By similarity). Regulates adipocyte lipid metabolism by decreasing non-esterified fatty acids and glycerol release and increases intracellular triglyceride content (By similarity). Stimulates wound healing by promoting cell migration and hair follicle regeneration through the JNK and ERK signaling pathways downstream of RHOA (By similarity).</text>
</comment>
<comment type="function">
    <text evidence="1 3">Inhibin B is a dimer of alpha and beta-B that plays a crucial role in the regulation of the reproductive system by inhibiting the secretion of follicle-stimulating hormone (FSH) from the anterior pituitary gland. Thereby, maintains reproductive homeostasis in both males and females. Acts as a more potent suppressor of FSH release than inhibin A (By similarity). Functions as competitive receptor antagonist binding activin type II receptors with high affinity in the presence of the TGF-beta type III coreceptor/TGFBR3L (By similarity).</text>
</comment>
<comment type="subunit">
    <text evidence="2">Dimeric, linked by one or more disulfide bonds. Inhibin B is a dimer of alpha and beta-B. Activin B is a homodimer of beta-B. Activin AB is a dimer of beta-A and beta-B. Interacts with FST and FSTL3.</text>
</comment>
<comment type="subcellular location">
    <subcellularLocation>
        <location>Secreted</location>
    </subcellularLocation>
</comment>
<comment type="similarity">
    <text evidence="7">Belongs to the TGF-beta family.</text>
</comment>
<evidence type="ECO:0000250" key="1">
    <source>
        <dbReference type="UniProtKB" id="P05111"/>
    </source>
</evidence>
<evidence type="ECO:0000250" key="2">
    <source>
        <dbReference type="UniProtKB" id="P09529"/>
    </source>
</evidence>
<evidence type="ECO:0000250" key="3">
    <source>
        <dbReference type="UniProtKB" id="P17490"/>
    </source>
</evidence>
<evidence type="ECO:0000255" key="4"/>
<evidence type="ECO:0000256" key="5">
    <source>
        <dbReference type="SAM" id="MobiDB-lite"/>
    </source>
</evidence>
<evidence type="ECO:0000269" key="6">
    <source>
    </source>
</evidence>
<evidence type="ECO:0000305" key="7"/>
<reference key="1">
    <citation type="submission" date="2002-05" db="EMBL/GenBank/DDBJ databases">
        <title>Molecular cloning of the porcine inhibin-beta B precursor subunit gene and reassignment to chromosome 15.</title>
        <authorList>
            <person name="Nonneman D.J."/>
            <person name="Rohrer G.A."/>
        </authorList>
    </citation>
    <scope>NUCLEOTIDE SEQUENCE [GENOMIC DNA]</scope>
</reference>
<reference key="2">
    <citation type="journal article" date="1985" name="Nature">
        <title>Complementary DNA sequences of ovarian follicular fluid inhibin show precursor structure and homology with transforming growth factor-beta.</title>
        <authorList>
            <person name="Mason A.J."/>
            <person name="Hayflick J.S."/>
            <person name="Ling N."/>
            <person name="Esch F."/>
            <person name="Ueno N."/>
            <person name="Ying S.-Y."/>
            <person name="Guillemin R."/>
            <person name="Niall H."/>
            <person name="Seeburg P.H."/>
        </authorList>
    </citation>
    <scope>NUCLEOTIDE SEQUENCE [MRNA] OF 59-407</scope>
    <source>
        <tissue>Ovarian follicular fluid</tissue>
    </source>
</reference>
<reference key="3">
    <citation type="journal article" date="1992" name="J. Biol. Chem.">
        <title>Isolation and characterization of native activin B.</title>
        <authorList>
            <person name="Nakamura T."/>
            <person name="Asashima M."/>
            <person name="Eto Y."/>
            <person name="Takio K."/>
            <person name="Uchiyama H."/>
            <person name="Moriya N."/>
            <person name="Ariizumi T."/>
            <person name="Yashiro T."/>
            <person name="Sugino K."/>
            <person name="Titani K."/>
            <person name="Sugino H."/>
        </authorList>
    </citation>
    <scope>PROTEIN SEQUENCE OF 293-307</scope>
</reference>
<accession>P04088</accession>
<accession>Q8MIM0</accession>
<proteinExistence type="evidence at protein level"/>
<protein>
    <recommendedName>
        <fullName>Inhibin beta B chain</fullName>
    </recommendedName>
    <alternativeName>
        <fullName>Activin beta-B chain</fullName>
    </alternativeName>
</protein>
<gene>
    <name type="primary">INHBB</name>
</gene>